<evidence type="ECO:0000255" key="1">
    <source>
        <dbReference type="HAMAP-Rule" id="MF_00019"/>
    </source>
</evidence>
<reference key="1">
    <citation type="submission" date="2006-12" db="EMBL/GenBank/DDBJ databases">
        <title>Complete sequence of Shewanella amazonensis SB2B.</title>
        <authorList>
            <consortium name="US DOE Joint Genome Institute"/>
            <person name="Copeland A."/>
            <person name="Lucas S."/>
            <person name="Lapidus A."/>
            <person name="Barry K."/>
            <person name="Detter J.C."/>
            <person name="Glavina del Rio T."/>
            <person name="Hammon N."/>
            <person name="Israni S."/>
            <person name="Dalin E."/>
            <person name="Tice H."/>
            <person name="Pitluck S."/>
            <person name="Munk A.C."/>
            <person name="Brettin T."/>
            <person name="Bruce D."/>
            <person name="Han C."/>
            <person name="Tapia R."/>
            <person name="Gilna P."/>
            <person name="Schmutz J."/>
            <person name="Larimer F."/>
            <person name="Land M."/>
            <person name="Hauser L."/>
            <person name="Kyrpides N."/>
            <person name="Mikhailova N."/>
            <person name="Fredrickson J."/>
            <person name="Richardson P."/>
        </authorList>
    </citation>
    <scope>NUCLEOTIDE SEQUENCE [LARGE SCALE GENOMIC DNA]</scope>
    <source>
        <strain>ATCC BAA-1098 / SB2B</strain>
    </source>
</reference>
<dbReference type="EC" id="2.3.1.274" evidence="1"/>
<dbReference type="EMBL" id="CP000507">
    <property type="protein sequence ID" value="ABM00189.1"/>
    <property type="molecule type" value="Genomic_DNA"/>
</dbReference>
<dbReference type="RefSeq" id="WP_011760096.1">
    <property type="nucleotide sequence ID" value="NC_008700.1"/>
</dbReference>
<dbReference type="SMR" id="A1S732"/>
<dbReference type="STRING" id="326297.Sama_1983"/>
<dbReference type="KEGG" id="saz:Sama_1983"/>
<dbReference type="eggNOG" id="COG0416">
    <property type="taxonomic scope" value="Bacteria"/>
</dbReference>
<dbReference type="HOGENOM" id="CLU_039379_1_0_6"/>
<dbReference type="OrthoDB" id="9806408at2"/>
<dbReference type="UniPathway" id="UPA00085"/>
<dbReference type="Proteomes" id="UP000009175">
    <property type="component" value="Chromosome"/>
</dbReference>
<dbReference type="GO" id="GO:0005737">
    <property type="term" value="C:cytoplasm"/>
    <property type="evidence" value="ECO:0007669"/>
    <property type="project" value="UniProtKB-SubCell"/>
</dbReference>
<dbReference type="GO" id="GO:0043811">
    <property type="term" value="F:phosphate:acyl-[acyl carrier protein] acyltransferase activity"/>
    <property type="evidence" value="ECO:0007669"/>
    <property type="project" value="UniProtKB-UniRule"/>
</dbReference>
<dbReference type="GO" id="GO:0006633">
    <property type="term" value="P:fatty acid biosynthetic process"/>
    <property type="evidence" value="ECO:0007669"/>
    <property type="project" value="UniProtKB-UniRule"/>
</dbReference>
<dbReference type="GO" id="GO:0008654">
    <property type="term" value="P:phospholipid biosynthetic process"/>
    <property type="evidence" value="ECO:0007669"/>
    <property type="project" value="UniProtKB-KW"/>
</dbReference>
<dbReference type="Gene3D" id="3.40.718.10">
    <property type="entry name" value="Isopropylmalate Dehydrogenase"/>
    <property type="match status" value="1"/>
</dbReference>
<dbReference type="HAMAP" id="MF_00019">
    <property type="entry name" value="PlsX"/>
    <property type="match status" value="1"/>
</dbReference>
<dbReference type="InterPro" id="IPR003664">
    <property type="entry name" value="FA_synthesis"/>
</dbReference>
<dbReference type="InterPro" id="IPR012281">
    <property type="entry name" value="Phospholipid_synth_PlsX-like"/>
</dbReference>
<dbReference type="NCBIfam" id="TIGR00182">
    <property type="entry name" value="plsX"/>
    <property type="match status" value="1"/>
</dbReference>
<dbReference type="PANTHER" id="PTHR30100">
    <property type="entry name" value="FATTY ACID/PHOSPHOLIPID SYNTHESIS PROTEIN PLSX"/>
    <property type="match status" value="1"/>
</dbReference>
<dbReference type="PANTHER" id="PTHR30100:SF1">
    <property type="entry name" value="PHOSPHATE ACYLTRANSFERASE"/>
    <property type="match status" value="1"/>
</dbReference>
<dbReference type="Pfam" id="PF02504">
    <property type="entry name" value="FA_synthesis"/>
    <property type="match status" value="1"/>
</dbReference>
<dbReference type="PIRSF" id="PIRSF002465">
    <property type="entry name" value="Phsphlp_syn_PlsX"/>
    <property type="match status" value="1"/>
</dbReference>
<dbReference type="SUPFAM" id="SSF53659">
    <property type="entry name" value="Isocitrate/Isopropylmalate dehydrogenase-like"/>
    <property type="match status" value="1"/>
</dbReference>
<organism>
    <name type="scientific">Shewanella amazonensis (strain ATCC BAA-1098 / SB2B)</name>
    <dbReference type="NCBI Taxonomy" id="326297"/>
    <lineage>
        <taxon>Bacteria</taxon>
        <taxon>Pseudomonadati</taxon>
        <taxon>Pseudomonadota</taxon>
        <taxon>Gammaproteobacteria</taxon>
        <taxon>Alteromonadales</taxon>
        <taxon>Shewanellaceae</taxon>
        <taxon>Shewanella</taxon>
    </lineage>
</organism>
<sequence>MTNLTLALDAMGGDHGPQVTVPAALQALRLHPKLSLLLVGDETQISPYLSSAEIDVRSRITLVHTTEVVRMDDKPATALRHAKNSSMRLAIEQVRDGMADGCVSAGNTGALMAMAKVLLKMLPGVDRPALVSCLPAINGKPVYLLDLGANIQCDYDTLFQFAVMGSVLSEAVDKIARPKVALLNVGIEECKGNGDVQQAAQLLLHTPQLNYAGFIEGDEIYSGKVDVIVCDGFVGNITLKTSEGIARLLVHQLKQGLAKGFVVRILARLLAPRIQKVLNQMNPDHYNGASLLGLRAVVVKSHGNADEHAYIQAISLAYTEAKRRLPEMIKDRLESILLDINS</sequence>
<accession>A1S732</accession>
<protein>
    <recommendedName>
        <fullName evidence="1">Phosphate acyltransferase</fullName>
        <ecNumber evidence="1">2.3.1.274</ecNumber>
    </recommendedName>
    <alternativeName>
        <fullName evidence="1">Acyl-ACP phosphotransacylase</fullName>
    </alternativeName>
    <alternativeName>
        <fullName evidence="1">Acyl-[acyl-carrier-protein]--phosphate acyltransferase</fullName>
    </alternativeName>
    <alternativeName>
        <fullName evidence="1">Phosphate-acyl-ACP acyltransferase</fullName>
    </alternativeName>
</protein>
<proteinExistence type="inferred from homology"/>
<gene>
    <name evidence="1" type="primary">plsX</name>
    <name type="ordered locus">Sama_1983</name>
</gene>
<comment type="function">
    <text evidence="1">Catalyzes the reversible formation of acyl-phosphate (acyl-PO(4)) from acyl-[acyl-carrier-protein] (acyl-ACP). This enzyme utilizes acyl-ACP as fatty acyl donor, but not acyl-CoA.</text>
</comment>
<comment type="catalytic activity">
    <reaction evidence="1">
        <text>a fatty acyl-[ACP] + phosphate = an acyl phosphate + holo-[ACP]</text>
        <dbReference type="Rhea" id="RHEA:42292"/>
        <dbReference type="Rhea" id="RHEA-COMP:9685"/>
        <dbReference type="Rhea" id="RHEA-COMP:14125"/>
        <dbReference type="ChEBI" id="CHEBI:43474"/>
        <dbReference type="ChEBI" id="CHEBI:59918"/>
        <dbReference type="ChEBI" id="CHEBI:64479"/>
        <dbReference type="ChEBI" id="CHEBI:138651"/>
        <dbReference type="EC" id="2.3.1.274"/>
    </reaction>
</comment>
<comment type="pathway">
    <text evidence="1">Lipid metabolism; phospholipid metabolism.</text>
</comment>
<comment type="subunit">
    <text evidence="1">Homodimer. Probably interacts with PlsY.</text>
</comment>
<comment type="subcellular location">
    <subcellularLocation>
        <location evidence="1">Cytoplasm</location>
    </subcellularLocation>
    <text evidence="1">Associated with the membrane possibly through PlsY.</text>
</comment>
<comment type="similarity">
    <text evidence="1">Belongs to the PlsX family.</text>
</comment>
<feature type="chain" id="PRO_1000001823" description="Phosphate acyltransferase">
    <location>
        <begin position="1"/>
        <end position="342"/>
    </location>
</feature>
<keyword id="KW-0963">Cytoplasm</keyword>
<keyword id="KW-0444">Lipid biosynthesis</keyword>
<keyword id="KW-0443">Lipid metabolism</keyword>
<keyword id="KW-0594">Phospholipid biosynthesis</keyword>
<keyword id="KW-1208">Phospholipid metabolism</keyword>
<keyword id="KW-1185">Reference proteome</keyword>
<keyword id="KW-0808">Transferase</keyword>
<name>PLSX_SHEAM</name>